<evidence type="ECO:0000255" key="1">
    <source>
        <dbReference type="HAMAP-Rule" id="MF_01333"/>
    </source>
</evidence>
<evidence type="ECO:0000305" key="2"/>
<reference key="1">
    <citation type="journal article" date="2007" name="PLoS Genet.">
        <title>Patterns and implications of gene gain and loss in the evolution of Prochlorococcus.</title>
        <authorList>
            <person name="Kettler G.C."/>
            <person name="Martiny A.C."/>
            <person name="Huang K."/>
            <person name="Zucker J."/>
            <person name="Coleman M.L."/>
            <person name="Rodrigue S."/>
            <person name="Chen F."/>
            <person name="Lapidus A."/>
            <person name="Ferriera S."/>
            <person name="Johnson J."/>
            <person name="Steglich C."/>
            <person name="Church G.M."/>
            <person name="Richardson P."/>
            <person name="Chisholm S.W."/>
        </authorList>
    </citation>
    <scope>NUCLEOTIDE SEQUENCE [LARGE SCALE GENOMIC DNA]</scope>
    <source>
        <strain>MIT 9303</strain>
    </source>
</reference>
<dbReference type="EMBL" id="CP000554">
    <property type="protein sequence ID" value="ABM79050.1"/>
    <property type="molecule type" value="Genomic_DNA"/>
</dbReference>
<dbReference type="RefSeq" id="WP_011826916.1">
    <property type="nucleotide sequence ID" value="NC_008820.1"/>
</dbReference>
<dbReference type="SMR" id="A2CC40"/>
<dbReference type="STRING" id="59922.P9303_23151"/>
<dbReference type="KEGG" id="pmf:P9303_23151"/>
<dbReference type="HOGENOM" id="CLU_061015_2_1_3"/>
<dbReference type="BioCyc" id="PMAR59922:G1G80-2031-MONOMER"/>
<dbReference type="Proteomes" id="UP000002274">
    <property type="component" value="Chromosome"/>
</dbReference>
<dbReference type="GO" id="GO:1990904">
    <property type="term" value="C:ribonucleoprotein complex"/>
    <property type="evidence" value="ECO:0007669"/>
    <property type="project" value="UniProtKB-KW"/>
</dbReference>
<dbReference type="GO" id="GO:0005840">
    <property type="term" value="C:ribosome"/>
    <property type="evidence" value="ECO:0007669"/>
    <property type="project" value="UniProtKB-KW"/>
</dbReference>
<dbReference type="GO" id="GO:0019843">
    <property type="term" value="F:rRNA binding"/>
    <property type="evidence" value="ECO:0007669"/>
    <property type="project" value="UniProtKB-UniRule"/>
</dbReference>
<dbReference type="GO" id="GO:0003735">
    <property type="term" value="F:structural constituent of ribosome"/>
    <property type="evidence" value="ECO:0007669"/>
    <property type="project" value="InterPro"/>
</dbReference>
<dbReference type="GO" id="GO:0000049">
    <property type="term" value="F:tRNA binding"/>
    <property type="evidence" value="ECO:0007669"/>
    <property type="project" value="UniProtKB-UniRule"/>
</dbReference>
<dbReference type="GO" id="GO:0006412">
    <property type="term" value="P:translation"/>
    <property type="evidence" value="ECO:0007669"/>
    <property type="project" value="UniProtKB-UniRule"/>
</dbReference>
<dbReference type="FunFam" id="3.30.1440.10:FF:000001">
    <property type="entry name" value="50S ribosomal protein L5"/>
    <property type="match status" value="1"/>
</dbReference>
<dbReference type="Gene3D" id="3.30.1440.10">
    <property type="match status" value="1"/>
</dbReference>
<dbReference type="HAMAP" id="MF_01333_B">
    <property type="entry name" value="Ribosomal_uL5_B"/>
    <property type="match status" value="1"/>
</dbReference>
<dbReference type="InterPro" id="IPR002132">
    <property type="entry name" value="Ribosomal_uL5"/>
</dbReference>
<dbReference type="InterPro" id="IPR020930">
    <property type="entry name" value="Ribosomal_uL5_bac-type"/>
</dbReference>
<dbReference type="InterPro" id="IPR031309">
    <property type="entry name" value="Ribosomal_uL5_C"/>
</dbReference>
<dbReference type="InterPro" id="IPR020929">
    <property type="entry name" value="Ribosomal_uL5_CS"/>
</dbReference>
<dbReference type="InterPro" id="IPR022803">
    <property type="entry name" value="Ribosomal_uL5_dom_sf"/>
</dbReference>
<dbReference type="InterPro" id="IPR031310">
    <property type="entry name" value="Ribosomal_uL5_N"/>
</dbReference>
<dbReference type="NCBIfam" id="NF000585">
    <property type="entry name" value="PRK00010.1"/>
    <property type="match status" value="1"/>
</dbReference>
<dbReference type="PANTHER" id="PTHR11994">
    <property type="entry name" value="60S RIBOSOMAL PROTEIN L11-RELATED"/>
    <property type="match status" value="1"/>
</dbReference>
<dbReference type="Pfam" id="PF00281">
    <property type="entry name" value="Ribosomal_L5"/>
    <property type="match status" value="1"/>
</dbReference>
<dbReference type="Pfam" id="PF00673">
    <property type="entry name" value="Ribosomal_L5_C"/>
    <property type="match status" value="1"/>
</dbReference>
<dbReference type="PIRSF" id="PIRSF002161">
    <property type="entry name" value="Ribosomal_L5"/>
    <property type="match status" value="1"/>
</dbReference>
<dbReference type="SUPFAM" id="SSF55282">
    <property type="entry name" value="RL5-like"/>
    <property type="match status" value="1"/>
</dbReference>
<dbReference type="PROSITE" id="PS00358">
    <property type="entry name" value="RIBOSOMAL_L5"/>
    <property type="match status" value="1"/>
</dbReference>
<keyword id="KW-0687">Ribonucleoprotein</keyword>
<keyword id="KW-0689">Ribosomal protein</keyword>
<keyword id="KW-0694">RNA-binding</keyword>
<keyword id="KW-0699">rRNA-binding</keyword>
<keyword id="KW-0820">tRNA-binding</keyword>
<accession>A2CC40</accession>
<gene>
    <name evidence="1" type="primary">rplE</name>
    <name evidence="1" type="synonym">rpl5</name>
    <name type="ordered locus">P9303_23151</name>
</gene>
<feature type="chain" id="PRO_1000052795" description="Large ribosomal subunit protein uL5">
    <location>
        <begin position="1"/>
        <end position="179"/>
    </location>
</feature>
<sequence>MSLKQRYRETIQPKLLKDLSLSNIHEVPKVLKITVNRGLGEAAQNAKSLEASITELATITGQKVVVTRAKKAIAGFKIRQGMPIGCAVTLRGERMYAFLERLINLALPRIRDFRGVSPKSFDGRGNYTLGVREQLIFPEVSFDKIDAIRGMDITIVTSARTDEEGQSLLREMGMPFRSN</sequence>
<organism>
    <name type="scientific">Prochlorococcus marinus (strain MIT 9303)</name>
    <dbReference type="NCBI Taxonomy" id="59922"/>
    <lineage>
        <taxon>Bacteria</taxon>
        <taxon>Bacillati</taxon>
        <taxon>Cyanobacteriota</taxon>
        <taxon>Cyanophyceae</taxon>
        <taxon>Synechococcales</taxon>
        <taxon>Prochlorococcaceae</taxon>
        <taxon>Prochlorococcus</taxon>
    </lineage>
</organism>
<name>RL5_PROM3</name>
<protein>
    <recommendedName>
        <fullName evidence="1">Large ribosomal subunit protein uL5</fullName>
    </recommendedName>
    <alternativeName>
        <fullName evidence="2">50S ribosomal protein L5</fullName>
    </alternativeName>
</protein>
<proteinExistence type="inferred from homology"/>
<comment type="function">
    <text evidence="1">This is one of the proteins that bind and probably mediate the attachment of the 5S RNA into the large ribosomal subunit, where it forms part of the central protuberance. In the 70S ribosome it contacts protein S13 of the 30S subunit (bridge B1b), connecting the 2 subunits; this bridge is implicated in subunit movement. Contacts the P site tRNA; the 5S rRNA and some of its associated proteins might help stabilize positioning of ribosome-bound tRNAs.</text>
</comment>
<comment type="subunit">
    <text evidence="1">Part of the 50S ribosomal subunit; part of the 5S rRNA/L5/L18/L25 subcomplex. Contacts the 5S rRNA and the P site tRNA. Forms a bridge to the 30S subunit in the 70S ribosome.</text>
</comment>
<comment type="similarity">
    <text evidence="1">Belongs to the universal ribosomal protein uL5 family.</text>
</comment>